<evidence type="ECO:0000255" key="1">
    <source>
        <dbReference type="HAMAP-Rule" id="MF_01395"/>
    </source>
</evidence>
<evidence type="ECO:0000255" key="2">
    <source>
        <dbReference type="PROSITE-ProRule" id="PRU01136"/>
    </source>
</evidence>
<name>ACCD_STRP6</name>
<protein>
    <recommendedName>
        <fullName evidence="1">Acetyl-coenzyme A carboxylase carboxyl transferase subunit beta</fullName>
        <shortName evidence="1">ACCase subunit beta</shortName>
        <shortName evidence="1">Acetyl-CoA carboxylase carboxyltransferase subunit beta</shortName>
        <ecNumber evidence="1">2.1.3.15</ecNumber>
    </recommendedName>
</protein>
<gene>
    <name evidence="1" type="primary">accD</name>
    <name type="ordered locus">M6_Spy1479</name>
</gene>
<keyword id="KW-0067">ATP-binding</keyword>
<keyword id="KW-0963">Cytoplasm</keyword>
<keyword id="KW-0275">Fatty acid biosynthesis</keyword>
<keyword id="KW-0276">Fatty acid metabolism</keyword>
<keyword id="KW-0444">Lipid biosynthesis</keyword>
<keyword id="KW-0443">Lipid metabolism</keyword>
<keyword id="KW-0479">Metal-binding</keyword>
<keyword id="KW-0547">Nucleotide-binding</keyword>
<keyword id="KW-0808">Transferase</keyword>
<keyword id="KW-0862">Zinc</keyword>
<keyword id="KW-0863">Zinc-finger</keyword>
<proteinExistence type="inferred from homology"/>
<reference key="1">
    <citation type="journal article" date="2004" name="J. Infect. Dis.">
        <title>Progress toward characterization of the group A Streptococcus metagenome: complete genome sequence of a macrolide-resistant serotype M6 strain.</title>
        <authorList>
            <person name="Banks D.J."/>
            <person name="Porcella S.F."/>
            <person name="Barbian K.D."/>
            <person name="Beres S.B."/>
            <person name="Philips L.E."/>
            <person name="Voyich J.M."/>
            <person name="DeLeo F.R."/>
            <person name="Martin J.M."/>
            <person name="Somerville G.A."/>
            <person name="Musser J.M."/>
        </authorList>
    </citation>
    <scope>NUCLEOTIDE SEQUENCE [LARGE SCALE GENOMIC DNA]</scope>
    <source>
        <strain>ATCC BAA-946 / MGAS10394</strain>
    </source>
</reference>
<organism>
    <name type="scientific">Streptococcus pyogenes serotype M6 (strain ATCC BAA-946 / MGAS10394)</name>
    <dbReference type="NCBI Taxonomy" id="286636"/>
    <lineage>
        <taxon>Bacteria</taxon>
        <taxon>Bacillati</taxon>
        <taxon>Bacillota</taxon>
        <taxon>Bacilli</taxon>
        <taxon>Lactobacillales</taxon>
        <taxon>Streptococcaceae</taxon>
        <taxon>Streptococcus</taxon>
    </lineage>
</organism>
<feature type="chain" id="PRO_0000389883" description="Acetyl-coenzyme A carboxylase carboxyl transferase subunit beta">
    <location>
        <begin position="1"/>
        <end position="288"/>
    </location>
</feature>
<feature type="domain" description="CoA carboxyltransferase N-terminal" evidence="2">
    <location>
        <begin position="34"/>
        <end position="288"/>
    </location>
</feature>
<feature type="zinc finger region" description="C4-type" evidence="1">
    <location>
        <begin position="38"/>
        <end position="59"/>
    </location>
</feature>
<feature type="binding site" evidence="1">
    <location>
        <position position="38"/>
    </location>
    <ligand>
        <name>Zn(2+)</name>
        <dbReference type="ChEBI" id="CHEBI:29105"/>
    </ligand>
</feature>
<feature type="binding site" evidence="1">
    <location>
        <position position="41"/>
    </location>
    <ligand>
        <name>Zn(2+)</name>
        <dbReference type="ChEBI" id="CHEBI:29105"/>
    </ligand>
</feature>
<feature type="binding site" evidence="1">
    <location>
        <position position="56"/>
    </location>
    <ligand>
        <name>Zn(2+)</name>
        <dbReference type="ChEBI" id="CHEBI:29105"/>
    </ligand>
</feature>
<feature type="binding site" evidence="1">
    <location>
        <position position="59"/>
    </location>
    <ligand>
        <name>Zn(2+)</name>
        <dbReference type="ChEBI" id="CHEBI:29105"/>
    </ligand>
</feature>
<sequence length="288" mass="31814">MALFRKKDKYIRITPNNFLKGSVSHNVPEVPDELFAKCPACKHMIYKKDLGLAKICPTCSYNFRISAQERLTLTVDEGSFQELFTSIETKDPLRFPGYQEKLQKAKETTGLHEAVLTGKAMVKGQQIALAIMDSHFIMASMGTVVGEKITRLFELAIEENLPVVIFTASGGARMQEGIMSLMQMAKVSAAVKRHSNAGLFYLTILTDPTTGGVTASFAMEGDIILAEPQSLVGFAGRRVIETTVRENLPDDFQKAEFLQDHGFVDAIVKRTELRDKIAHLVAFHGGGQ</sequence>
<comment type="function">
    <text evidence="1">Component of the acetyl coenzyme A carboxylase (ACC) complex. Biotin carboxylase (BC) catalyzes the carboxylation of biotin on its carrier protein (BCCP) and then the CO(2) group is transferred by the transcarboxylase to acetyl-CoA to form malonyl-CoA.</text>
</comment>
<comment type="catalytic activity">
    <reaction evidence="1">
        <text>N(6)-carboxybiotinyl-L-lysyl-[protein] + acetyl-CoA = N(6)-biotinyl-L-lysyl-[protein] + malonyl-CoA</text>
        <dbReference type="Rhea" id="RHEA:54728"/>
        <dbReference type="Rhea" id="RHEA-COMP:10505"/>
        <dbReference type="Rhea" id="RHEA-COMP:10506"/>
        <dbReference type="ChEBI" id="CHEBI:57288"/>
        <dbReference type="ChEBI" id="CHEBI:57384"/>
        <dbReference type="ChEBI" id="CHEBI:83144"/>
        <dbReference type="ChEBI" id="CHEBI:83145"/>
        <dbReference type="EC" id="2.1.3.15"/>
    </reaction>
</comment>
<comment type="cofactor">
    <cofactor evidence="1">
        <name>Zn(2+)</name>
        <dbReference type="ChEBI" id="CHEBI:29105"/>
    </cofactor>
    <text evidence="1">Binds 1 zinc ion per subunit.</text>
</comment>
<comment type="pathway">
    <text evidence="1">Lipid metabolism; malonyl-CoA biosynthesis; malonyl-CoA from acetyl-CoA: step 1/1.</text>
</comment>
<comment type="subunit">
    <text evidence="1">Acetyl-CoA carboxylase is a heterohexamer composed of biotin carboxyl carrier protein (AccB), biotin carboxylase (AccC) and two subunits each of ACCase subunit alpha (AccA) and ACCase subunit beta (AccD).</text>
</comment>
<comment type="subcellular location">
    <subcellularLocation>
        <location evidence="1">Cytoplasm</location>
    </subcellularLocation>
</comment>
<comment type="similarity">
    <text evidence="1">Belongs to the AccD/PCCB family.</text>
</comment>
<accession>Q5XAE9</accession>
<dbReference type="EC" id="2.1.3.15" evidence="1"/>
<dbReference type="EMBL" id="CP000003">
    <property type="protein sequence ID" value="AAT87614.1"/>
    <property type="molecule type" value="Genomic_DNA"/>
</dbReference>
<dbReference type="RefSeq" id="WP_002983347.1">
    <property type="nucleotide sequence ID" value="NC_006086.1"/>
</dbReference>
<dbReference type="SMR" id="Q5XAE9"/>
<dbReference type="KEGG" id="spa:M6_Spy1479"/>
<dbReference type="HOGENOM" id="CLU_015486_1_1_9"/>
<dbReference type="UniPathway" id="UPA00655">
    <property type="reaction ID" value="UER00711"/>
</dbReference>
<dbReference type="Proteomes" id="UP000001167">
    <property type="component" value="Chromosome"/>
</dbReference>
<dbReference type="GO" id="GO:0009317">
    <property type="term" value="C:acetyl-CoA carboxylase complex"/>
    <property type="evidence" value="ECO:0007669"/>
    <property type="project" value="InterPro"/>
</dbReference>
<dbReference type="GO" id="GO:0003989">
    <property type="term" value="F:acetyl-CoA carboxylase activity"/>
    <property type="evidence" value="ECO:0007669"/>
    <property type="project" value="InterPro"/>
</dbReference>
<dbReference type="GO" id="GO:0005524">
    <property type="term" value="F:ATP binding"/>
    <property type="evidence" value="ECO:0007669"/>
    <property type="project" value="UniProtKB-KW"/>
</dbReference>
<dbReference type="GO" id="GO:0016743">
    <property type="term" value="F:carboxyl- or carbamoyltransferase activity"/>
    <property type="evidence" value="ECO:0007669"/>
    <property type="project" value="UniProtKB-UniRule"/>
</dbReference>
<dbReference type="GO" id="GO:0008270">
    <property type="term" value="F:zinc ion binding"/>
    <property type="evidence" value="ECO:0007669"/>
    <property type="project" value="UniProtKB-UniRule"/>
</dbReference>
<dbReference type="GO" id="GO:0006633">
    <property type="term" value="P:fatty acid biosynthetic process"/>
    <property type="evidence" value="ECO:0007669"/>
    <property type="project" value="UniProtKB-KW"/>
</dbReference>
<dbReference type="GO" id="GO:2001295">
    <property type="term" value="P:malonyl-CoA biosynthetic process"/>
    <property type="evidence" value="ECO:0007669"/>
    <property type="project" value="UniProtKB-UniRule"/>
</dbReference>
<dbReference type="Gene3D" id="3.90.226.10">
    <property type="entry name" value="2-enoyl-CoA Hydratase, Chain A, domain 1"/>
    <property type="match status" value="1"/>
</dbReference>
<dbReference type="HAMAP" id="MF_01395">
    <property type="entry name" value="AcetylCoA_CT_beta"/>
    <property type="match status" value="1"/>
</dbReference>
<dbReference type="InterPro" id="IPR034733">
    <property type="entry name" value="AcCoA_carboxyl_beta"/>
</dbReference>
<dbReference type="InterPro" id="IPR000438">
    <property type="entry name" value="Acetyl_CoA_COase_Trfase_b_su"/>
</dbReference>
<dbReference type="InterPro" id="IPR029045">
    <property type="entry name" value="ClpP/crotonase-like_dom_sf"/>
</dbReference>
<dbReference type="InterPro" id="IPR011762">
    <property type="entry name" value="COA_CT_N"/>
</dbReference>
<dbReference type="NCBIfam" id="TIGR00515">
    <property type="entry name" value="accD"/>
    <property type="match status" value="1"/>
</dbReference>
<dbReference type="PANTHER" id="PTHR42995">
    <property type="entry name" value="ACETYL-COENZYME A CARBOXYLASE CARBOXYL TRANSFERASE SUBUNIT BETA, CHLOROPLASTIC"/>
    <property type="match status" value="1"/>
</dbReference>
<dbReference type="PANTHER" id="PTHR42995:SF5">
    <property type="entry name" value="ACETYL-COENZYME A CARBOXYLASE CARBOXYL TRANSFERASE SUBUNIT BETA, CHLOROPLASTIC"/>
    <property type="match status" value="1"/>
</dbReference>
<dbReference type="Pfam" id="PF01039">
    <property type="entry name" value="Carboxyl_trans"/>
    <property type="match status" value="1"/>
</dbReference>
<dbReference type="PRINTS" id="PR01070">
    <property type="entry name" value="ACCCTRFRASEB"/>
</dbReference>
<dbReference type="SUPFAM" id="SSF52096">
    <property type="entry name" value="ClpP/crotonase"/>
    <property type="match status" value="1"/>
</dbReference>
<dbReference type="PROSITE" id="PS50980">
    <property type="entry name" value="COA_CT_NTER"/>
    <property type="match status" value="1"/>
</dbReference>